<accession>B1IRJ2</accession>
<name>GARL_ECOLC</name>
<reference key="1">
    <citation type="submission" date="2008-02" db="EMBL/GenBank/DDBJ databases">
        <title>Complete sequence of Escherichia coli C str. ATCC 8739.</title>
        <authorList>
            <person name="Copeland A."/>
            <person name="Lucas S."/>
            <person name="Lapidus A."/>
            <person name="Glavina del Rio T."/>
            <person name="Dalin E."/>
            <person name="Tice H."/>
            <person name="Bruce D."/>
            <person name="Goodwin L."/>
            <person name="Pitluck S."/>
            <person name="Kiss H."/>
            <person name="Brettin T."/>
            <person name="Detter J.C."/>
            <person name="Han C."/>
            <person name="Kuske C.R."/>
            <person name="Schmutz J."/>
            <person name="Larimer F."/>
            <person name="Land M."/>
            <person name="Hauser L."/>
            <person name="Kyrpides N."/>
            <person name="Mikhailova N."/>
            <person name="Ingram L."/>
            <person name="Richardson P."/>
        </authorList>
    </citation>
    <scope>NUCLEOTIDE SEQUENCE [LARGE SCALE GENOMIC DNA]</scope>
    <source>
        <strain>ATCC 8739 / DSM 1576 / NBRC 3972 / NCIMB 8545 / WDCM 00012 / Crooks</strain>
    </source>
</reference>
<protein>
    <recommendedName>
        <fullName evidence="1">5-keto-4-deoxy-D-glucarate aldolase</fullName>
        <shortName evidence="1">KDGluc aldolase</shortName>
        <shortName evidence="1">KDGlucA</shortName>
        <ecNumber evidence="1">4.1.2.20</ecNumber>
    </recommendedName>
    <alternativeName>
        <fullName evidence="1">2-dehydro-3-deoxy-D-glucarate aldolase</fullName>
    </alternativeName>
    <alternativeName>
        <fullName evidence="1">2-keto-3-deoxy-D-glucarate aldolase</fullName>
    </alternativeName>
    <alternativeName>
        <fullName evidence="1">5-dehydro-4-deoxy-D-glucarate aldolase</fullName>
    </alternativeName>
    <alternativeName>
        <fullName evidence="1">Alpha-keto-beta-deoxy-D-glucarate aldolase</fullName>
    </alternativeName>
</protein>
<keyword id="KW-0456">Lyase</keyword>
<keyword id="KW-0460">Magnesium</keyword>
<keyword id="KW-0479">Metal-binding</keyword>
<sequence>MNNDVFPNKFKAALAAKQVQIGCWSALSNPISTEVLGLAGFDWLVLDGEHAPNDISTFIPQLMALKGSASAPVVRVPTNEPVIIKRLLDIGFYNFLIPFVETKEKAELAVASTRYPPEGIRGVSVSHRANMFGTVADYFAQSNKNITILVQIESQQGVDNVDAIAATEGVDGIFVGPSDLAAALGHLGNASHPDVQKAIQHIFNRASAHGKPSGILAPVEADARRYLEWGATFVAVGSDLGVFRSATQKLADTFKK</sequence>
<comment type="function">
    <text evidence="1">Catalyzes the reversible retro-aldol cleavage of both 5-keto-4-deoxy-D-glucarate and 2-keto-3-deoxy-D-glucarate to pyruvate and tartronic semialdehyde.</text>
</comment>
<comment type="catalytic activity">
    <reaction evidence="1">
        <text>5-dehydro-4-deoxy-D-glucarate = 2-hydroxy-3-oxopropanoate + pyruvate</text>
        <dbReference type="Rhea" id="RHEA:27726"/>
        <dbReference type="ChEBI" id="CHEBI:15361"/>
        <dbReference type="ChEBI" id="CHEBI:42819"/>
        <dbReference type="ChEBI" id="CHEBI:57978"/>
    </reaction>
</comment>
<comment type="catalytic activity">
    <reaction evidence="1">
        <text>2-dehydro-3-deoxy-D-glucarate = 2-hydroxy-3-oxopropanoate + pyruvate</text>
        <dbReference type="Rhea" id="RHEA:10268"/>
        <dbReference type="ChEBI" id="CHEBI:15361"/>
        <dbReference type="ChEBI" id="CHEBI:57978"/>
        <dbReference type="ChEBI" id="CHEBI:58098"/>
        <dbReference type="EC" id="4.1.2.20"/>
    </reaction>
</comment>
<comment type="cofactor">
    <cofactor evidence="1">
        <name>Mg(2+)</name>
        <dbReference type="ChEBI" id="CHEBI:18420"/>
    </cofactor>
    <text evidence="1">Binds 1 Mg(2+) ion per subunit.</text>
</comment>
<comment type="pathway">
    <text evidence="1">Carbohydrate acid metabolism; galactarate degradation; D-glycerate from galactarate: step 2/3.</text>
</comment>
<comment type="subunit">
    <text evidence="1">Homohexamer; trimer of dimers.</text>
</comment>
<comment type="similarity">
    <text evidence="1">Belongs to the HpcH/HpaI aldolase family. KDGluc aldolase subfamily.</text>
</comment>
<organism>
    <name type="scientific">Escherichia coli (strain ATCC 8739 / DSM 1576 / NBRC 3972 / NCIMB 8545 / WDCM 00012 / Crooks)</name>
    <dbReference type="NCBI Taxonomy" id="481805"/>
    <lineage>
        <taxon>Bacteria</taxon>
        <taxon>Pseudomonadati</taxon>
        <taxon>Pseudomonadota</taxon>
        <taxon>Gammaproteobacteria</taxon>
        <taxon>Enterobacterales</taxon>
        <taxon>Enterobacteriaceae</taxon>
        <taxon>Escherichia</taxon>
    </lineage>
</organism>
<feature type="chain" id="PRO_0000353142" description="5-keto-4-deoxy-D-glucarate aldolase">
    <location>
        <begin position="1"/>
        <end position="256"/>
    </location>
</feature>
<feature type="active site" description="Proton acceptor" evidence="1">
    <location>
        <position position="50"/>
    </location>
</feature>
<feature type="binding site" evidence="1">
    <location>
        <position position="151"/>
    </location>
    <ligand>
        <name>substrate</name>
    </ligand>
</feature>
<feature type="binding site" evidence="1">
    <location>
        <position position="153"/>
    </location>
    <ligand>
        <name>Mg(2+)</name>
        <dbReference type="ChEBI" id="CHEBI:18420"/>
    </ligand>
</feature>
<feature type="binding site" evidence="1">
    <location>
        <position position="178"/>
    </location>
    <ligand>
        <name>substrate</name>
    </ligand>
</feature>
<feature type="binding site" evidence="1">
    <location>
        <position position="179"/>
    </location>
    <ligand>
        <name>Mg(2+)</name>
        <dbReference type="ChEBI" id="CHEBI:18420"/>
    </ligand>
</feature>
<feature type="binding site" evidence="1">
    <location>
        <position position="179"/>
    </location>
    <ligand>
        <name>substrate</name>
    </ligand>
</feature>
<feature type="site" description="Transition state stabilizer" evidence="1">
    <location>
        <position position="75"/>
    </location>
</feature>
<feature type="site" description="Increases basicity of active site His" evidence="1">
    <location>
        <position position="89"/>
    </location>
</feature>
<proteinExistence type="inferred from homology"/>
<dbReference type="EC" id="4.1.2.20" evidence="1"/>
<dbReference type="EMBL" id="CP000946">
    <property type="protein sequence ID" value="ACA76251.1"/>
    <property type="molecule type" value="Genomic_DNA"/>
</dbReference>
<dbReference type="RefSeq" id="WP_001058236.1">
    <property type="nucleotide sequence ID" value="NZ_MTFT01000027.1"/>
</dbReference>
<dbReference type="SMR" id="B1IRJ2"/>
<dbReference type="KEGG" id="ecl:EcolC_0574"/>
<dbReference type="HOGENOM" id="CLU_059964_1_0_6"/>
<dbReference type="UniPathway" id="UPA00565">
    <property type="reaction ID" value="UER00630"/>
</dbReference>
<dbReference type="GO" id="GO:0005737">
    <property type="term" value="C:cytoplasm"/>
    <property type="evidence" value="ECO:0007669"/>
    <property type="project" value="TreeGrafter"/>
</dbReference>
<dbReference type="GO" id="GO:0008672">
    <property type="term" value="F:2-dehydro-3-deoxyglucarate aldolase activity"/>
    <property type="evidence" value="ECO:0007669"/>
    <property type="project" value="UniProtKB-UniRule"/>
</dbReference>
<dbReference type="GO" id="GO:0000287">
    <property type="term" value="F:magnesium ion binding"/>
    <property type="evidence" value="ECO:0007669"/>
    <property type="project" value="UniProtKB-UniRule"/>
</dbReference>
<dbReference type="GO" id="GO:0042838">
    <property type="term" value="P:D-glucarate catabolic process"/>
    <property type="evidence" value="ECO:0007669"/>
    <property type="project" value="UniProtKB-UniRule"/>
</dbReference>
<dbReference type="GO" id="GO:0046392">
    <property type="term" value="P:galactarate catabolic process"/>
    <property type="evidence" value="ECO:0007669"/>
    <property type="project" value="UniProtKB-UniRule"/>
</dbReference>
<dbReference type="FunFam" id="3.20.20.60:FF:000004">
    <property type="entry name" value="5-keto-4-deoxy-D-glucarate aldolase"/>
    <property type="match status" value="1"/>
</dbReference>
<dbReference type="Gene3D" id="3.20.20.60">
    <property type="entry name" value="Phosphoenolpyruvate-binding domains"/>
    <property type="match status" value="1"/>
</dbReference>
<dbReference type="HAMAP" id="MF_01291">
    <property type="entry name" value="KDGluc_aldolase"/>
    <property type="match status" value="1"/>
</dbReference>
<dbReference type="InterPro" id="IPR005000">
    <property type="entry name" value="Aldolase/citrate-lyase_domain"/>
</dbReference>
<dbReference type="InterPro" id="IPR017648">
    <property type="entry name" value="GarL"/>
</dbReference>
<dbReference type="InterPro" id="IPR050251">
    <property type="entry name" value="HpcH-HpaI_aldolase"/>
</dbReference>
<dbReference type="InterPro" id="IPR015813">
    <property type="entry name" value="Pyrv/PenolPyrv_kinase-like_dom"/>
</dbReference>
<dbReference type="InterPro" id="IPR040442">
    <property type="entry name" value="Pyrv_kinase-like_dom_sf"/>
</dbReference>
<dbReference type="NCBIfam" id="TIGR03239">
    <property type="entry name" value="GarL"/>
    <property type="match status" value="1"/>
</dbReference>
<dbReference type="NCBIfam" id="NF007849">
    <property type="entry name" value="PRK10558.1"/>
    <property type="match status" value="1"/>
</dbReference>
<dbReference type="PANTHER" id="PTHR30502">
    <property type="entry name" value="2-KETO-3-DEOXY-L-RHAMNONATE ALDOLASE"/>
    <property type="match status" value="1"/>
</dbReference>
<dbReference type="PANTHER" id="PTHR30502:SF4">
    <property type="entry name" value="5-KETO-4-DEOXY-D-GLUCARATE ALDOLASE"/>
    <property type="match status" value="1"/>
</dbReference>
<dbReference type="Pfam" id="PF03328">
    <property type="entry name" value="HpcH_HpaI"/>
    <property type="match status" value="1"/>
</dbReference>
<dbReference type="SUPFAM" id="SSF51621">
    <property type="entry name" value="Phosphoenolpyruvate/pyruvate domain"/>
    <property type="match status" value="1"/>
</dbReference>
<evidence type="ECO:0000255" key="1">
    <source>
        <dbReference type="HAMAP-Rule" id="MF_01291"/>
    </source>
</evidence>
<gene>
    <name evidence="1" type="primary">garL</name>
    <name type="ordered locus">EcolC_0574</name>
</gene>